<feature type="chain" id="PRO_0000184256" description="Ribosomal RNA small subunit methyltransferase G">
    <location>
        <begin position="1"/>
        <end position="251"/>
    </location>
</feature>
<feature type="region of interest" description="Disordered" evidence="2">
    <location>
        <begin position="224"/>
        <end position="251"/>
    </location>
</feature>
<feature type="binding site" evidence="1">
    <location>
        <position position="74"/>
    </location>
    <ligand>
        <name>S-adenosyl-L-methionine</name>
        <dbReference type="ChEBI" id="CHEBI:59789"/>
    </ligand>
</feature>
<feature type="binding site" evidence="1">
    <location>
        <position position="79"/>
    </location>
    <ligand>
        <name>S-adenosyl-L-methionine</name>
        <dbReference type="ChEBI" id="CHEBI:59789"/>
    </ligand>
</feature>
<feature type="binding site" evidence="1">
    <location>
        <begin position="125"/>
        <end position="126"/>
    </location>
    <ligand>
        <name>S-adenosyl-L-methionine</name>
        <dbReference type="ChEBI" id="CHEBI:59789"/>
    </ligand>
</feature>
<feature type="binding site" evidence="1">
    <location>
        <position position="144"/>
    </location>
    <ligand>
        <name>S-adenosyl-L-methionine</name>
        <dbReference type="ChEBI" id="CHEBI:59789"/>
    </ligand>
</feature>
<dbReference type="EC" id="2.1.1.-" evidence="1"/>
<dbReference type="EMBL" id="BA000045">
    <property type="protein sequence ID" value="BAC88649.1"/>
    <property type="molecule type" value="Genomic_DNA"/>
</dbReference>
<dbReference type="RefSeq" id="NP_923654.1">
    <property type="nucleotide sequence ID" value="NC_005125.1"/>
</dbReference>
<dbReference type="RefSeq" id="WP_011140710.1">
    <property type="nucleotide sequence ID" value="NC_005125.1"/>
</dbReference>
<dbReference type="SMR" id="Q7NMQ7"/>
<dbReference type="FunCoup" id="Q7NMQ7">
    <property type="interactions" value="26"/>
</dbReference>
<dbReference type="STRING" id="251221.gene:10758184"/>
<dbReference type="EnsemblBacteria" id="BAC88649">
    <property type="protein sequence ID" value="BAC88649"/>
    <property type="gene ID" value="BAC88649"/>
</dbReference>
<dbReference type="KEGG" id="gvi:glr0708"/>
<dbReference type="PATRIC" id="fig|251221.4.peg.720"/>
<dbReference type="eggNOG" id="COG0357">
    <property type="taxonomic scope" value="Bacteria"/>
</dbReference>
<dbReference type="HOGENOM" id="CLU_065341_0_2_3"/>
<dbReference type="InParanoid" id="Q7NMQ7"/>
<dbReference type="OrthoDB" id="9808773at2"/>
<dbReference type="PhylomeDB" id="Q7NMQ7"/>
<dbReference type="Proteomes" id="UP000000557">
    <property type="component" value="Chromosome"/>
</dbReference>
<dbReference type="GO" id="GO:0005829">
    <property type="term" value="C:cytosol"/>
    <property type="evidence" value="ECO:0000318"/>
    <property type="project" value="GO_Central"/>
</dbReference>
<dbReference type="GO" id="GO:0070043">
    <property type="term" value="F:rRNA (guanine-N7-)-methyltransferase activity"/>
    <property type="evidence" value="ECO:0000318"/>
    <property type="project" value="GO_Central"/>
</dbReference>
<dbReference type="CDD" id="cd02440">
    <property type="entry name" value="AdoMet_MTases"/>
    <property type="match status" value="1"/>
</dbReference>
<dbReference type="FunFam" id="3.40.50.150:FF:000041">
    <property type="entry name" value="Ribosomal RNA small subunit methyltransferase G"/>
    <property type="match status" value="1"/>
</dbReference>
<dbReference type="Gene3D" id="3.40.50.150">
    <property type="entry name" value="Vaccinia Virus protein VP39"/>
    <property type="match status" value="1"/>
</dbReference>
<dbReference type="HAMAP" id="MF_00074">
    <property type="entry name" value="16SrRNA_methyltr_G"/>
    <property type="match status" value="1"/>
</dbReference>
<dbReference type="InterPro" id="IPR003682">
    <property type="entry name" value="rRNA_ssu_MeTfrase_G"/>
</dbReference>
<dbReference type="InterPro" id="IPR029063">
    <property type="entry name" value="SAM-dependent_MTases_sf"/>
</dbReference>
<dbReference type="NCBIfam" id="TIGR00138">
    <property type="entry name" value="rsmG_gidB"/>
    <property type="match status" value="1"/>
</dbReference>
<dbReference type="PANTHER" id="PTHR31760">
    <property type="entry name" value="S-ADENOSYL-L-METHIONINE-DEPENDENT METHYLTRANSFERASES SUPERFAMILY PROTEIN"/>
    <property type="match status" value="1"/>
</dbReference>
<dbReference type="PANTHER" id="PTHR31760:SF0">
    <property type="entry name" value="S-ADENOSYL-L-METHIONINE-DEPENDENT METHYLTRANSFERASES SUPERFAMILY PROTEIN"/>
    <property type="match status" value="1"/>
</dbReference>
<dbReference type="Pfam" id="PF02527">
    <property type="entry name" value="GidB"/>
    <property type="match status" value="1"/>
</dbReference>
<dbReference type="SUPFAM" id="SSF53335">
    <property type="entry name" value="S-adenosyl-L-methionine-dependent methyltransferases"/>
    <property type="match status" value="1"/>
</dbReference>
<accession>Q7NMQ7</accession>
<gene>
    <name evidence="1" type="primary">rsmG</name>
    <name type="ordered locus">glr0708</name>
</gene>
<proteinExistence type="inferred from homology"/>
<keyword id="KW-0963">Cytoplasm</keyword>
<keyword id="KW-0489">Methyltransferase</keyword>
<keyword id="KW-1185">Reference proteome</keyword>
<keyword id="KW-0698">rRNA processing</keyword>
<keyword id="KW-0949">S-adenosyl-L-methionine</keyword>
<keyword id="KW-0808">Transferase</keyword>
<comment type="function">
    <text evidence="1">Specifically methylates the N7 position of a guanine in 16S rRNA.</text>
</comment>
<comment type="subcellular location">
    <subcellularLocation>
        <location evidence="1">Cytoplasm</location>
    </subcellularLocation>
</comment>
<comment type="similarity">
    <text evidence="1">Belongs to the methyltransferase superfamily. RNA methyltransferase RsmG family.</text>
</comment>
<name>RSMG_GLOVI</name>
<evidence type="ECO:0000255" key="1">
    <source>
        <dbReference type="HAMAP-Rule" id="MF_00074"/>
    </source>
</evidence>
<evidence type="ECO:0000256" key="2">
    <source>
        <dbReference type="SAM" id="MobiDB-lite"/>
    </source>
</evidence>
<protein>
    <recommendedName>
        <fullName evidence="1">Ribosomal RNA small subunit methyltransferase G</fullName>
        <ecNumber evidence="1">2.1.1.-</ecNumber>
    </recommendedName>
    <alternativeName>
        <fullName evidence="1">16S rRNA 7-methylguanosine methyltransferase</fullName>
        <shortName evidence="1">16S rRNA m7G methyltransferase</shortName>
    </alternativeName>
</protein>
<sequence>MDSGALWQDLGWQPDTLQARSFERLYALVLAGNTRLNLTRITGREEFWEKHLFDSLRGLAAFQDQKEPSLIDIGTGAGFPGLPIAIAHPDWYVVLVDSVRKKIAFVLSTIQALGLTNAQALTGRAEDLAHRREHRESYDLAVLRAVAQANVCAEYALPFVKLGGAAVLYRGNWEVQEEVELARACRALGGEIVEVDAFELPVSRAVRHCVVIRKTGPGLRVFPRPAGLPTQHPLGAIEGAPRVESEEPEEP</sequence>
<organism>
    <name type="scientific">Gloeobacter violaceus (strain ATCC 29082 / PCC 7421)</name>
    <dbReference type="NCBI Taxonomy" id="251221"/>
    <lineage>
        <taxon>Bacteria</taxon>
        <taxon>Bacillati</taxon>
        <taxon>Cyanobacteriota</taxon>
        <taxon>Cyanophyceae</taxon>
        <taxon>Gloeobacterales</taxon>
        <taxon>Gloeobacteraceae</taxon>
        <taxon>Gloeobacter</taxon>
    </lineage>
</organism>
<reference key="1">
    <citation type="journal article" date="2003" name="DNA Res.">
        <title>Complete genome structure of Gloeobacter violaceus PCC 7421, a cyanobacterium that lacks thylakoids.</title>
        <authorList>
            <person name="Nakamura Y."/>
            <person name="Kaneko T."/>
            <person name="Sato S."/>
            <person name="Mimuro M."/>
            <person name="Miyashita H."/>
            <person name="Tsuchiya T."/>
            <person name="Sasamoto S."/>
            <person name="Watanabe A."/>
            <person name="Kawashima K."/>
            <person name="Kishida Y."/>
            <person name="Kiyokawa C."/>
            <person name="Kohara M."/>
            <person name="Matsumoto M."/>
            <person name="Matsuno A."/>
            <person name="Nakazaki N."/>
            <person name="Shimpo S."/>
            <person name="Takeuchi C."/>
            <person name="Yamada M."/>
            <person name="Tabata S."/>
        </authorList>
    </citation>
    <scope>NUCLEOTIDE SEQUENCE [LARGE SCALE GENOMIC DNA]</scope>
    <source>
        <strain>ATCC 29082 / PCC 7421</strain>
    </source>
</reference>